<evidence type="ECO:0000255" key="1">
    <source>
        <dbReference type="HAMAP-Rule" id="MF_00139"/>
    </source>
</evidence>
<evidence type="ECO:0000255" key="2">
    <source>
        <dbReference type="PROSITE-ProRule" id="PRU01202"/>
    </source>
</evidence>
<name>PUR9_LIMRD</name>
<dbReference type="EC" id="2.1.2.3" evidence="1"/>
<dbReference type="EC" id="3.5.4.10" evidence="1"/>
<dbReference type="EMBL" id="CP000705">
    <property type="protein sequence ID" value="ABQ82416.1"/>
    <property type="molecule type" value="Genomic_DNA"/>
</dbReference>
<dbReference type="RefSeq" id="WP_003669729.1">
    <property type="nucleotide sequence ID" value="NC_009513.1"/>
</dbReference>
<dbReference type="SMR" id="A5VHU2"/>
<dbReference type="STRING" id="557436.Lreu_0144"/>
<dbReference type="KEGG" id="lre:Lreu_0144"/>
<dbReference type="PATRIC" id="fig|557436.17.peg.319"/>
<dbReference type="eggNOG" id="COG0138">
    <property type="taxonomic scope" value="Bacteria"/>
</dbReference>
<dbReference type="HOGENOM" id="CLU_016316_5_2_9"/>
<dbReference type="UniPathway" id="UPA00074">
    <property type="reaction ID" value="UER00133"/>
</dbReference>
<dbReference type="UniPathway" id="UPA00074">
    <property type="reaction ID" value="UER00135"/>
</dbReference>
<dbReference type="Proteomes" id="UP000001991">
    <property type="component" value="Chromosome"/>
</dbReference>
<dbReference type="GO" id="GO:0005829">
    <property type="term" value="C:cytosol"/>
    <property type="evidence" value="ECO:0007669"/>
    <property type="project" value="TreeGrafter"/>
</dbReference>
<dbReference type="GO" id="GO:0003937">
    <property type="term" value="F:IMP cyclohydrolase activity"/>
    <property type="evidence" value="ECO:0007669"/>
    <property type="project" value="UniProtKB-UniRule"/>
</dbReference>
<dbReference type="GO" id="GO:0004643">
    <property type="term" value="F:phosphoribosylaminoimidazolecarboxamide formyltransferase activity"/>
    <property type="evidence" value="ECO:0007669"/>
    <property type="project" value="UniProtKB-UniRule"/>
</dbReference>
<dbReference type="GO" id="GO:0006189">
    <property type="term" value="P:'de novo' IMP biosynthetic process"/>
    <property type="evidence" value="ECO:0007669"/>
    <property type="project" value="UniProtKB-UniRule"/>
</dbReference>
<dbReference type="CDD" id="cd01421">
    <property type="entry name" value="IMPCH"/>
    <property type="match status" value="1"/>
</dbReference>
<dbReference type="FunFam" id="3.40.140.20:FF:000001">
    <property type="entry name" value="Bifunctional purine biosynthesis protein PurH"/>
    <property type="match status" value="1"/>
</dbReference>
<dbReference type="FunFam" id="3.40.140.20:FF:000002">
    <property type="entry name" value="Bifunctional purine biosynthesis protein PurH"/>
    <property type="match status" value="1"/>
</dbReference>
<dbReference type="FunFam" id="3.40.50.1380:FF:000001">
    <property type="entry name" value="Bifunctional purine biosynthesis protein PurH"/>
    <property type="match status" value="1"/>
</dbReference>
<dbReference type="Gene3D" id="3.40.140.20">
    <property type="match status" value="2"/>
</dbReference>
<dbReference type="Gene3D" id="3.40.50.1380">
    <property type="entry name" value="Methylglyoxal synthase-like domain"/>
    <property type="match status" value="1"/>
</dbReference>
<dbReference type="HAMAP" id="MF_00139">
    <property type="entry name" value="PurH"/>
    <property type="match status" value="1"/>
</dbReference>
<dbReference type="InterPro" id="IPR024051">
    <property type="entry name" value="AICAR_Tfase_dup_dom_sf"/>
</dbReference>
<dbReference type="InterPro" id="IPR016193">
    <property type="entry name" value="Cytidine_deaminase-like"/>
</dbReference>
<dbReference type="InterPro" id="IPR011607">
    <property type="entry name" value="MGS-like_dom"/>
</dbReference>
<dbReference type="InterPro" id="IPR036914">
    <property type="entry name" value="MGS-like_dom_sf"/>
</dbReference>
<dbReference type="InterPro" id="IPR002695">
    <property type="entry name" value="PurH-like"/>
</dbReference>
<dbReference type="NCBIfam" id="NF002049">
    <property type="entry name" value="PRK00881.1"/>
    <property type="match status" value="1"/>
</dbReference>
<dbReference type="NCBIfam" id="TIGR00355">
    <property type="entry name" value="purH"/>
    <property type="match status" value="1"/>
</dbReference>
<dbReference type="PANTHER" id="PTHR11692:SF0">
    <property type="entry name" value="BIFUNCTIONAL PURINE BIOSYNTHESIS PROTEIN ATIC"/>
    <property type="match status" value="1"/>
</dbReference>
<dbReference type="PANTHER" id="PTHR11692">
    <property type="entry name" value="BIFUNCTIONAL PURINE BIOSYNTHESIS PROTEIN PURH"/>
    <property type="match status" value="1"/>
</dbReference>
<dbReference type="Pfam" id="PF01808">
    <property type="entry name" value="AICARFT_IMPCHas"/>
    <property type="match status" value="1"/>
</dbReference>
<dbReference type="Pfam" id="PF02142">
    <property type="entry name" value="MGS"/>
    <property type="match status" value="1"/>
</dbReference>
<dbReference type="PIRSF" id="PIRSF000414">
    <property type="entry name" value="AICARFT_IMPCHas"/>
    <property type="match status" value="1"/>
</dbReference>
<dbReference type="SMART" id="SM00798">
    <property type="entry name" value="AICARFT_IMPCHas"/>
    <property type="match status" value="1"/>
</dbReference>
<dbReference type="SMART" id="SM00851">
    <property type="entry name" value="MGS"/>
    <property type="match status" value="1"/>
</dbReference>
<dbReference type="SUPFAM" id="SSF53927">
    <property type="entry name" value="Cytidine deaminase-like"/>
    <property type="match status" value="1"/>
</dbReference>
<dbReference type="SUPFAM" id="SSF52335">
    <property type="entry name" value="Methylglyoxal synthase-like"/>
    <property type="match status" value="1"/>
</dbReference>
<dbReference type="PROSITE" id="PS51855">
    <property type="entry name" value="MGS"/>
    <property type="match status" value="1"/>
</dbReference>
<organism>
    <name type="scientific">Limosilactobacillus reuteri (strain DSM 20016)</name>
    <name type="common">Lactobacillus reuteri</name>
    <dbReference type="NCBI Taxonomy" id="557436"/>
    <lineage>
        <taxon>Bacteria</taxon>
        <taxon>Bacillati</taxon>
        <taxon>Bacillota</taxon>
        <taxon>Bacilli</taxon>
        <taxon>Lactobacillales</taxon>
        <taxon>Lactobacillaceae</taxon>
        <taxon>Limosilactobacillus</taxon>
    </lineage>
</organism>
<accession>A5VHU2</accession>
<proteinExistence type="inferred from homology"/>
<protein>
    <recommendedName>
        <fullName evidence="1">Bifunctional purine biosynthesis protein PurH</fullName>
    </recommendedName>
    <domain>
        <recommendedName>
            <fullName evidence="1">Phosphoribosylaminoimidazolecarboxamide formyltransferase</fullName>
            <ecNumber evidence="1">2.1.2.3</ecNumber>
        </recommendedName>
        <alternativeName>
            <fullName evidence="1">AICAR transformylase</fullName>
        </alternativeName>
    </domain>
    <domain>
        <recommendedName>
            <fullName evidence="1">IMP cyclohydrolase</fullName>
            <ecNumber evidence="1">3.5.4.10</ecNumber>
        </recommendedName>
        <alternativeName>
            <fullName evidence="1">ATIC</fullName>
        </alternativeName>
        <alternativeName>
            <fullName evidence="1">IMP synthase</fullName>
        </alternativeName>
        <alternativeName>
            <fullName evidence="1">Inosinicase</fullName>
        </alternativeName>
    </domain>
</protein>
<keyword id="KW-0378">Hydrolase</keyword>
<keyword id="KW-0511">Multifunctional enzyme</keyword>
<keyword id="KW-0658">Purine biosynthesis</keyword>
<keyword id="KW-1185">Reference proteome</keyword>
<keyword id="KW-0808">Transferase</keyword>
<gene>
    <name evidence="1" type="primary">purH</name>
    <name type="ordered locus">Lreu_0144</name>
</gene>
<feature type="chain" id="PRO_1000057899" description="Bifunctional purine biosynthesis protein PurH">
    <location>
        <begin position="1"/>
        <end position="512"/>
    </location>
</feature>
<feature type="domain" description="MGS-like" evidence="2">
    <location>
        <begin position="1"/>
        <end position="144"/>
    </location>
</feature>
<sequence length="512" mass="57033">MKRALVSVSDKQNLVPFVKGLVENGFEIISTGGTKRVLDEAGIETIGIEDVTHFPEILDGRVKTLNPYVHGGLLARRNLPEHMATLEKLNITPIDLVCVNLYPFKETIEKPGVEIADAIENIDIGGPSMVRSAAKNYHDVTIVVDQADYDEVLAQIKEDGETSLATRARLAAKAFRHTAAYDSLISQYLTKQTGLEDPEKLTLSWDLKETMRYGENSHQKAWLYEDALPKAFSVLQAKQLHGKKLSYNNIKDADEALRCIREFDEPTVVAMKHMNPCGIGRGDSLVQAWDRAYEADPVSIFGGVIALNRQVDLVTAEKMHKIFLEIVIAPGFDDDAFELLAKKKNIRLLTLDFSKKDEPTKHEVVSVMGGMLLQEQDMLKEDYHDWQCVTEKQPTEEQLKTLMFAWKAVKHAKSNAIVLANDERTLGVGEGQPNRIDSLKIAVKHAGEAIDDRTVMASDAFFPFGDCVEYAGQNGIKAIVQPGGSVRDQESIEMANKYGIAMVTTGIRHFRH</sequence>
<comment type="catalytic activity">
    <reaction evidence="1">
        <text>(6R)-10-formyltetrahydrofolate + 5-amino-1-(5-phospho-beta-D-ribosyl)imidazole-4-carboxamide = 5-formamido-1-(5-phospho-D-ribosyl)imidazole-4-carboxamide + (6S)-5,6,7,8-tetrahydrofolate</text>
        <dbReference type="Rhea" id="RHEA:22192"/>
        <dbReference type="ChEBI" id="CHEBI:57453"/>
        <dbReference type="ChEBI" id="CHEBI:58467"/>
        <dbReference type="ChEBI" id="CHEBI:58475"/>
        <dbReference type="ChEBI" id="CHEBI:195366"/>
        <dbReference type="EC" id="2.1.2.3"/>
    </reaction>
</comment>
<comment type="catalytic activity">
    <reaction evidence="1">
        <text>IMP + H2O = 5-formamido-1-(5-phospho-D-ribosyl)imidazole-4-carboxamide</text>
        <dbReference type="Rhea" id="RHEA:18445"/>
        <dbReference type="ChEBI" id="CHEBI:15377"/>
        <dbReference type="ChEBI" id="CHEBI:58053"/>
        <dbReference type="ChEBI" id="CHEBI:58467"/>
        <dbReference type="EC" id="3.5.4.10"/>
    </reaction>
</comment>
<comment type="pathway">
    <text evidence="1">Purine metabolism; IMP biosynthesis via de novo pathway; 5-formamido-1-(5-phospho-D-ribosyl)imidazole-4-carboxamide from 5-amino-1-(5-phospho-D-ribosyl)imidazole-4-carboxamide (10-formyl THF route): step 1/1.</text>
</comment>
<comment type="pathway">
    <text evidence="1">Purine metabolism; IMP biosynthesis via de novo pathway; IMP from 5-formamido-1-(5-phospho-D-ribosyl)imidazole-4-carboxamide: step 1/1.</text>
</comment>
<comment type="domain">
    <text evidence="1">The IMP cyclohydrolase activity resides in the N-terminal region.</text>
</comment>
<comment type="similarity">
    <text evidence="1">Belongs to the PurH family.</text>
</comment>
<reference key="1">
    <citation type="journal article" date="2011" name="PLoS Genet.">
        <title>The evolution of host specialization in the vertebrate gut symbiont Lactobacillus reuteri.</title>
        <authorList>
            <person name="Frese S.A."/>
            <person name="Benson A.K."/>
            <person name="Tannock G.W."/>
            <person name="Loach D.M."/>
            <person name="Kim J."/>
            <person name="Zhang M."/>
            <person name="Oh P.L."/>
            <person name="Heng N.C."/>
            <person name="Patil P.B."/>
            <person name="Juge N."/>
            <person name="Mackenzie D.A."/>
            <person name="Pearson B.M."/>
            <person name="Lapidus A."/>
            <person name="Dalin E."/>
            <person name="Tice H."/>
            <person name="Goltsman E."/>
            <person name="Land M."/>
            <person name="Hauser L."/>
            <person name="Ivanova N."/>
            <person name="Kyrpides N.C."/>
            <person name="Walter J."/>
        </authorList>
    </citation>
    <scope>NUCLEOTIDE SEQUENCE [LARGE SCALE GENOMIC DNA]</scope>
    <source>
        <strain>DSM 20016</strain>
    </source>
</reference>